<evidence type="ECO:0000250" key="1">
    <source>
        <dbReference type="UniProtKB" id="P26281"/>
    </source>
</evidence>
<evidence type="ECO:0000305" key="2"/>
<keyword id="KW-0067">ATP-binding</keyword>
<keyword id="KW-0289">Folate biosynthesis</keyword>
<keyword id="KW-0418">Kinase</keyword>
<keyword id="KW-0547">Nucleotide-binding</keyword>
<keyword id="KW-1185">Reference proteome</keyword>
<keyword id="KW-0808">Transferase</keyword>
<feature type="chain" id="PRO_0000168257" description="2-amino-4-hydroxy-6-hydroxymethyldihydropteridine pyrophosphokinase">
    <location>
        <begin position="1"/>
        <end position="147"/>
    </location>
</feature>
<accession>P0C936</accession>
<accession>O83019</accession>
<protein>
    <recommendedName>
        <fullName evidence="1">2-amino-4-hydroxy-6-hydroxymethyldihydropteridine pyrophosphokinase</fullName>
        <ecNumber evidence="1">2.7.6.3</ecNumber>
    </recommendedName>
    <alternativeName>
        <fullName evidence="1">6-hydroxymethyl-7,8-dihydropterin pyrophosphokinase</fullName>
        <shortName evidence="1">PPPK</shortName>
    </alternativeName>
    <alternativeName>
        <fullName evidence="1">7,8-dihydro-6-hydroxymethylpterin-pyrophosphokinase</fullName>
        <shortName evidence="1">HPPK</shortName>
    </alternativeName>
</protein>
<reference key="1">
    <citation type="journal article" date="2003" name="J. Bacteriol.">
        <title>Complete genome sequence of the oral pathogenic bacterium Porphyromonas gingivalis strain W83.</title>
        <authorList>
            <person name="Nelson K.E."/>
            <person name="Fleischmann R.D."/>
            <person name="DeBoy R.T."/>
            <person name="Paulsen I.T."/>
            <person name="Fouts D.E."/>
            <person name="Eisen J.A."/>
            <person name="Daugherty S.C."/>
            <person name="Dodson R.J."/>
            <person name="Durkin A.S."/>
            <person name="Gwinn M.L."/>
            <person name="Haft D.H."/>
            <person name="Kolonay J.F."/>
            <person name="Nelson W.C."/>
            <person name="Mason T.M."/>
            <person name="Tallon L."/>
            <person name="Gray J."/>
            <person name="Granger D."/>
            <person name="Tettelin H."/>
            <person name="Dong H."/>
            <person name="Galvin J.L."/>
            <person name="Duncan M.J."/>
            <person name="Dewhirst F.E."/>
            <person name="Fraser C.M."/>
        </authorList>
    </citation>
    <scope>NUCLEOTIDE SEQUENCE [LARGE SCALE GENOMIC DNA]</scope>
    <source>
        <strain>ATCC BAA-308 / W83</strain>
    </source>
</reference>
<organism>
    <name type="scientific">Porphyromonas gingivalis (strain ATCC BAA-308 / W83)</name>
    <dbReference type="NCBI Taxonomy" id="242619"/>
    <lineage>
        <taxon>Bacteria</taxon>
        <taxon>Pseudomonadati</taxon>
        <taxon>Bacteroidota</taxon>
        <taxon>Bacteroidia</taxon>
        <taxon>Bacteroidales</taxon>
        <taxon>Porphyromonadaceae</taxon>
        <taxon>Porphyromonas</taxon>
    </lineage>
</organism>
<dbReference type="EC" id="2.7.6.3" evidence="1"/>
<dbReference type="EMBL" id="AE015924">
    <property type="protein sequence ID" value="AAQ66579.1"/>
    <property type="status" value="ALT_INIT"/>
    <property type="molecule type" value="Genomic_DNA"/>
</dbReference>
<dbReference type="RefSeq" id="WP_004585365.1">
    <property type="nucleotide sequence ID" value="NC_002950.2"/>
</dbReference>
<dbReference type="SMR" id="P0C936"/>
<dbReference type="STRING" id="242619.PG_1541"/>
<dbReference type="EnsemblBacteria" id="AAQ66579">
    <property type="protein sequence ID" value="AAQ66579"/>
    <property type="gene ID" value="PG_1541"/>
</dbReference>
<dbReference type="GeneID" id="29255793"/>
<dbReference type="KEGG" id="pgi:PG_1541"/>
<dbReference type="eggNOG" id="COG0801">
    <property type="taxonomic scope" value="Bacteria"/>
</dbReference>
<dbReference type="HOGENOM" id="CLU_097916_0_0_10"/>
<dbReference type="UniPathway" id="UPA00077">
    <property type="reaction ID" value="UER00155"/>
</dbReference>
<dbReference type="Proteomes" id="UP000000588">
    <property type="component" value="Chromosome"/>
</dbReference>
<dbReference type="GO" id="GO:0003848">
    <property type="term" value="F:2-amino-4-hydroxy-6-hydroxymethyldihydropteridine diphosphokinase activity"/>
    <property type="evidence" value="ECO:0007669"/>
    <property type="project" value="UniProtKB-EC"/>
</dbReference>
<dbReference type="GO" id="GO:0005524">
    <property type="term" value="F:ATP binding"/>
    <property type="evidence" value="ECO:0007669"/>
    <property type="project" value="UniProtKB-KW"/>
</dbReference>
<dbReference type="GO" id="GO:0016301">
    <property type="term" value="F:kinase activity"/>
    <property type="evidence" value="ECO:0007669"/>
    <property type="project" value="UniProtKB-KW"/>
</dbReference>
<dbReference type="GO" id="GO:0046656">
    <property type="term" value="P:folic acid biosynthetic process"/>
    <property type="evidence" value="ECO:0007669"/>
    <property type="project" value="UniProtKB-KW"/>
</dbReference>
<dbReference type="GO" id="GO:0046654">
    <property type="term" value="P:tetrahydrofolate biosynthetic process"/>
    <property type="evidence" value="ECO:0007669"/>
    <property type="project" value="UniProtKB-UniPathway"/>
</dbReference>
<dbReference type="CDD" id="cd00483">
    <property type="entry name" value="HPPK"/>
    <property type="match status" value="1"/>
</dbReference>
<dbReference type="Gene3D" id="3.30.70.560">
    <property type="entry name" value="7,8-Dihydro-6-hydroxymethylpterin-pyrophosphokinase HPPK"/>
    <property type="match status" value="1"/>
</dbReference>
<dbReference type="InterPro" id="IPR000550">
    <property type="entry name" value="Hppk"/>
</dbReference>
<dbReference type="InterPro" id="IPR035907">
    <property type="entry name" value="Hppk_sf"/>
</dbReference>
<dbReference type="NCBIfam" id="TIGR01498">
    <property type="entry name" value="folK"/>
    <property type="match status" value="1"/>
</dbReference>
<dbReference type="PANTHER" id="PTHR43071">
    <property type="entry name" value="2-AMINO-4-HYDROXY-6-HYDROXYMETHYLDIHYDROPTERIDINE PYROPHOSPHOKINASE"/>
    <property type="match status" value="1"/>
</dbReference>
<dbReference type="PANTHER" id="PTHR43071:SF1">
    <property type="entry name" value="2-AMINO-4-HYDROXY-6-HYDROXYMETHYLDIHYDROPTERIDINE PYROPHOSPHOKINASE"/>
    <property type="match status" value="1"/>
</dbReference>
<dbReference type="Pfam" id="PF01288">
    <property type="entry name" value="HPPK"/>
    <property type="match status" value="1"/>
</dbReference>
<dbReference type="SUPFAM" id="SSF55083">
    <property type="entry name" value="6-hydroxymethyl-7,8-dihydropterin pyrophosphokinase, HPPK"/>
    <property type="match status" value="1"/>
</dbReference>
<comment type="function">
    <text evidence="1">Catalyzes the transfer of pyrophosphate from adenosine triphosphate (ATP) to 6-hydroxymethyl-7,8-dihydropterin, an enzymatic step in folate biosynthesis pathway.</text>
</comment>
<comment type="catalytic activity">
    <reaction evidence="1">
        <text>6-hydroxymethyl-7,8-dihydropterin + ATP = (7,8-dihydropterin-6-yl)methyl diphosphate + AMP + H(+)</text>
        <dbReference type="Rhea" id="RHEA:11412"/>
        <dbReference type="ChEBI" id="CHEBI:15378"/>
        <dbReference type="ChEBI" id="CHEBI:30616"/>
        <dbReference type="ChEBI" id="CHEBI:44841"/>
        <dbReference type="ChEBI" id="CHEBI:72950"/>
        <dbReference type="ChEBI" id="CHEBI:456215"/>
        <dbReference type="EC" id="2.7.6.3"/>
    </reaction>
</comment>
<comment type="pathway">
    <text evidence="1">Cofactor biosynthesis; tetrahydrofolate biosynthesis; 2-amino-4-hydroxy-6-hydroxymethyl-7,8-dihydropteridine diphosphate from 7,8-dihydroneopterin triphosphate: step 4/4.</text>
</comment>
<comment type="similarity">
    <text evidence="2">Belongs to the HPPK family.</text>
</comment>
<comment type="sequence caution" evidence="2">
    <conflict type="erroneous initiation">
        <sequence resource="EMBL-CDS" id="AAQ66579"/>
    </conflict>
</comment>
<proteinExistence type="inferred from homology"/>
<gene>
    <name type="primary">folK</name>
    <name type="ordered locus">PG_1541</name>
</gene>
<sequence>MAIVYLSLGSNLGDRHSLLSAALEMLQTRVGRLLTLSRFYETEPWGFESPHPFLNAVVALRSELKPQDILHITQAIERELGRTQKSNGGVYHDRPIDIDILLHSVYPKVQSPELELPHPQMWQRDFVRMPLSDVAPWLHPEAPTPNL</sequence>
<name>HPPK_PORGI</name>